<evidence type="ECO:0000255" key="1">
    <source>
        <dbReference type="HAMAP-Rule" id="MF_00054"/>
    </source>
</evidence>
<gene>
    <name evidence="1" type="primary">fusA</name>
    <name type="ordered locus">CV_4189</name>
</gene>
<sequence length="698" mass="77008">MARKTPIERYRNIGISAHIDAGKTTTTERILFYTGVNHKIGEVHDGAATMDWMEQEQERGITITSAATTTFWKGMAMQFPEHRFNIIDTPGHVDFTIEVERSMRVLDGAVMVYCAVGGVQPQSETVWRQANKYKVPRIAFVNKMDRQGANFFRAVEQVKTRLRGNPVPIVVPIGAEDGFSGVVDLLKMKAIIWDEASQGMKFEYGDIPADLVSVAEEWREKMVEAAAEVSDEMMDKYLGGETLTEEEIIAGLRERTLKCEIQPMLCGSAFKNKGVQRMLDAVIELLPSPTEVPAIKGETDGVEAERHASDDEPFSALAFKLMNDPYVGQLTFFRVYSGVVKSGDTVLNSVKGKKERIGRIVQMHANDRKEIEEVRAGDIAAAIGLKEVTTGETLCAVDAEIILERMEFPDPVIHVAVEPKTKADQEKMGVALNRLAKEDPSFRVRTDEESGQTIISGMGELHLEILVDRMKREFGVEANVGAPQVAYRETITKTVTDVEGKHVKQSGGKGQYGHAVITLEPSGEGKGYQFFDEIKGGVIPREFIPSVDKGIQNTLGNGILAGFPVVDVTVRLTFGSYHDVDSSQIAFELAGSLAFKEAMRRAGPCILEPMMAVEVETPEEYMGDVMGDLNRRRGMVQGMDDDGLGGKKIKAEVPLAEMFGYSTDLRSATQGRATYSMEFKHYSEAPKHVAEAVMAAKK</sequence>
<reference key="1">
    <citation type="journal article" date="2003" name="Proc. Natl. Acad. Sci. U.S.A.">
        <title>The complete genome sequence of Chromobacterium violaceum reveals remarkable and exploitable bacterial adaptability.</title>
        <authorList>
            <person name="Vasconcelos A.T.R."/>
            <person name="de Almeida D.F."/>
            <person name="Hungria M."/>
            <person name="Guimaraes C.T."/>
            <person name="Antonio R.V."/>
            <person name="Almeida F.C."/>
            <person name="de Almeida L.G.P."/>
            <person name="de Almeida R."/>
            <person name="Alves-Gomes J.A."/>
            <person name="Andrade E.M."/>
            <person name="Araripe J."/>
            <person name="de Araujo M.F.F."/>
            <person name="Astolfi-Filho S."/>
            <person name="Azevedo V."/>
            <person name="Baptista A.J."/>
            <person name="Bataus L.A.M."/>
            <person name="Batista J.S."/>
            <person name="Belo A."/>
            <person name="van den Berg C."/>
            <person name="Bogo M."/>
            <person name="Bonatto S."/>
            <person name="Bordignon J."/>
            <person name="Brigido M.M."/>
            <person name="Brito C.A."/>
            <person name="Brocchi M."/>
            <person name="Burity H.A."/>
            <person name="Camargo A.A."/>
            <person name="Cardoso D.D.P."/>
            <person name="Carneiro N.P."/>
            <person name="Carraro D.M."/>
            <person name="Carvalho C.M.B."/>
            <person name="Cascardo J.C.M."/>
            <person name="Cavada B.S."/>
            <person name="Chueire L.M.O."/>
            <person name="Creczynski-Pasa T.B."/>
            <person name="Cunha-Junior N.C."/>
            <person name="Fagundes N."/>
            <person name="Falcao C.L."/>
            <person name="Fantinatti F."/>
            <person name="Farias I.P."/>
            <person name="Felipe M.S.S."/>
            <person name="Ferrari L.P."/>
            <person name="Ferro J.A."/>
            <person name="Ferro M.I.T."/>
            <person name="Franco G.R."/>
            <person name="Freitas N.S.A."/>
            <person name="Furlan L.R."/>
            <person name="Gazzinelli R.T."/>
            <person name="Gomes E.A."/>
            <person name="Goncalves P.R."/>
            <person name="Grangeiro T.B."/>
            <person name="Grattapaglia D."/>
            <person name="Grisard E.C."/>
            <person name="Hanna E.S."/>
            <person name="Jardim S.N."/>
            <person name="Laurino J."/>
            <person name="Leoi L.C.T."/>
            <person name="Lima L.F.A."/>
            <person name="Loureiro M.F."/>
            <person name="Lyra M.C.C.P."/>
            <person name="Madeira H.M.F."/>
            <person name="Manfio G.P."/>
            <person name="Maranhao A.Q."/>
            <person name="Martins W.S."/>
            <person name="di Mauro S.M.Z."/>
            <person name="de Medeiros S.R.B."/>
            <person name="Meissner R.V."/>
            <person name="Moreira M.A.M."/>
            <person name="Nascimento F.F."/>
            <person name="Nicolas M.F."/>
            <person name="Oliveira J.G."/>
            <person name="Oliveira S.C."/>
            <person name="Paixao R.F.C."/>
            <person name="Parente J.A."/>
            <person name="Pedrosa F.O."/>
            <person name="Pena S.D.J."/>
            <person name="Pereira J.O."/>
            <person name="Pereira M."/>
            <person name="Pinto L.S.R.C."/>
            <person name="Pinto L.S."/>
            <person name="Porto J.I.R."/>
            <person name="Potrich D.P."/>
            <person name="Ramalho-Neto C.E."/>
            <person name="Reis A.M.M."/>
            <person name="Rigo L.U."/>
            <person name="Rondinelli E."/>
            <person name="Santos E.B.P."/>
            <person name="Santos F.R."/>
            <person name="Schneider M.P.C."/>
            <person name="Seuanez H.N."/>
            <person name="Silva A.M.R."/>
            <person name="da Silva A.L.C."/>
            <person name="Silva D.W."/>
            <person name="Silva R."/>
            <person name="Simoes I.C."/>
            <person name="Simon D."/>
            <person name="Soares C.M.A."/>
            <person name="Soares R.B.A."/>
            <person name="Souza E.M."/>
            <person name="Souza K.R.L."/>
            <person name="Souza R.C."/>
            <person name="Steffens M.B.R."/>
            <person name="Steindel M."/>
            <person name="Teixeira S.R."/>
            <person name="Urmenyi T."/>
            <person name="Vettore A."/>
            <person name="Wassem R."/>
            <person name="Zaha A."/>
            <person name="Simpson A.J.G."/>
        </authorList>
    </citation>
    <scope>NUCLEOTIDE SEQUENCE [LARGE SCALE GENOMIC DNA]</scope>
    <source>
        <strain>ATCC 12472 / DSM 30191 / JCM 1249 / CCUG 213 / NBRC 12614 / NCIMB 9131 / NCTC 9757 / MK</strain>
    </source>
</reference>
<proteinExistence type="inferred from homology"/>
<organism>
    <name type="scientific">Chromobacterium violaceum (strain ATCC 12472 / DSM 30191 / JCM 1249 / CCUG 213 / NBRC 12614 / NCIMB 9131 / NCTC 9757 / MK)</name>
    <dbReference type="NCBI Taxonomy" id="243365"/>
    <lineage>
        <taxon>Bacteria</taxon>
        <taxon>Pseudomonadati</taxon>
        <taxon>Pseudomonadota</taxon>
        <taxon>Betaproteobacteria</taxon>
        <taxon>Neisseriales</taxon>
        <taxon>Chromobacteriaceae</taxon>
        <taxon>Chromobacterium</taxon>
    </lineage>
</organism>
<protein>
    <recommendedName>
        <fullName evidence="1">Elongation factor G</fullName>
        <shortName evidence="1">EF-G</shortName>
    </recommendedName>
</protein>
<name>EFG_CHRVO</name>
<comment type="function">
    <text evidence="1">Catalyzes the GTP-dependent ribosomal translocation step during translation elongation. During this step, the ribosome changes from the pre-translocational (PRE) to the post-translocational (POST) state as the newly formed A-site-bound peptidyl-tRNA and P-site-bound deacylated tRNA move to the P and E sites, respectively. Catalyzes the coordinated movement of the two tRNA molecules, the mRNA and conformational changes in the ribosome.</text>
</comment>
<comment type="subcellular location">
    <subcellularLocation>
        <location evidence="1">Cytoplasm</location>
    </subcellularLocation>
</comment>
<comment type="similarity">
    <text evidence="1">Belongs to the TRAFAC class translation factor GTPase superfamily. Classic translation factor GTPase family. EF-G/EF-2 subfamily.</text>
</comment>
<accession>Q7NQF0</accession>
<feature type="chain" id="PRO_0000091106" description="Elongation factor G">
    <location>
        <begin position="1"/>
        <end position="698"/>
    </location>
</feature>
<feature type="domain" description="tr-type G">
    <location>
        <begin position="8"/>
        <end position="290"/>
    </location>
</feature>
<feature type="binding site" evidence="1">
    <location>
        <begin position="17"/>
        <end position="24"/>
    </location>
    <ligand>
        <name>GTP</name>
        <dbReference type="ChEBI" id="CHEBI:37565"/>
    </ligand>
</feature>
<feature type="binding site" evidence="1">
    <location>
        <begin position="88"/>
        <end position="92"/>
    </location>
    <ligand>
        <name>GTP</name>
        <dbReference type="ChEBI" id="CHEBI:37565"/>
    </ligand>
</feature>
<feature type="binding site" evidence="1">
    <location>
        <begin position="142"/>
        <end position="145"/>
    </location>
    <ligand>
        <name>GTP</name>
        <dbReference type="ChEBI" id="CHEBI:37565"/>
    </ligand>
</feature>
<keyword id="KW-0963">Cytoplasm</keyword>
<keyword id="KW-0251">Elongation factor</keyword>
<keyword id="KW-0342">GTP-binding</keyword>
<keyword id="KW-0547">Nucleotide-binding</keyword>
<keyword id="KW-0648">Protein biosynthesis</keyword>
<keyword id="KW-1185">Reference proteome</keyword>
<dbReference type="EMBL" id="AE016825">
    <property type="protein sequence ID" value="AAQ61849.1"/>
    <property type="molecule type" value="Genomic_DNA"/>
</dbReference>
<dbReference type="RefSeq" id="WP_011137736.1">
    <property type="nucleotide sequence ID" value="NC_005085.1"/>
</dbReference>
<dbReference type="SMR" id="Q7NQF0"/>
<dbReference type="STRING" id="243365.CV_4189"/>
<dbReference type="GeneID" id="66366339"/>
<dbReference type="KEGG" id="cvi:CV_4189"/>
<dbReference type="eggNOG" id="COG0480">
    <property type="taxonomic scope" value="Bacteria"/>
</dbReference>
<dbReference type="HOGENOM" id="CLU_002794_4_1_4"/>
<dbReference type="OrthoDB" id="9804431at2"/>
<dbReference type="Proteomes" id="UP000001424">
    <property type="component" value="Chromosome"/>
</dbReference>
<dbReference type="GO" id="GO:0005737">
    <property type="term" value="C:cytoplasm"/>
    <property type="evidence" value="ECO:0007669"/>
    <property type="project" value="UniProtKB-SubCell"/>
</dbReference>
<dbReference type="GO" id="GO:0005525">
    <property type="term" value="F:GTP binding"/>
    <property type="evidence" value="ECO:0007669"/>
    <property type="project" value="UniProtKB-UniRule"/>
</dbReference>
<dbReference type="GO" id="GO:0003924">
    <property type="term" value="F:GTPase activity"/>
    <property type="evidence" value="ECO:0007669"/>
    <property type="project" value="InterPro"/>
</dbReference>
<dbReference type="GO" id="GO:0097216">
    <property type="term" value="F:guanosine tetraphosphate binding"/>
    <property type="evidence" value="ECO:0007669"/>
    <property type="project" value="UniProtKB-ARBA"/>
</dbReference>
<dbReference type="GO" id="GO:0003746">
    <property type="term" value="F:translation elongation factor activity"/>
    <property type="evidence" value="ECO:0007669"/>
    <property type="project" value="UniProtKB-UniRule"/>
</dbReference>
<dbReference type="GO" id="GO:0032790">
    <property type="term" value="P:ribosome disassembly"/>
    <property type="evidence" value="ECO:0007669"/>
    <property type="project" value="TreeGrafter"/>
</dbReference>
<dbReference type="CDD" id="cd01886">
    <property type="entry name" value="EF-G"/>
    <property type="match status" value="1"/>
</dbReference>
<dbReference type="CDD" id="cd16262">
    <property type="entry name" value="EFG_III"/>
    <property type="match status" value="1"/>
</dbReference>
<dbReference type="CDD" id="cd01434">
    <property type="entry name" value="EFG_mtEFG1_IV"/>
    <property type="match status" value="1"/>
</dbReference>
<dbReference type="CDD" id="cd03713">
    <property type="entry name" value="EFG_mtEFG_C"/>
    <property type="match status" value="1"/>
</dbReference>
<dbReference type="CDD" id="cd04088">
    <property type="entry name" value="EFG_mtEFG_II"/>
    <property type="match status" value="1"/>
</dbReference>
<dbReference type="FunFam" id="2.40.30.10:FF:000006">
    <property type="entry name" value="Elongation factor G"/>
    <property type="match status" value="1"/>
</dbReference>
<dbReference type="FunFam" id="3.30.230.10:FF:000003">
    <property type="entry name" value="Elongation factor G"/>
    <property type="match status" value="1"/>
</dbReference>
<dbReference type="FunFam" id="3.30.70.240:FF:000001">
    <property type="entry name" value="Elongation factor G"/>
    <property type="match status" value="1"/>
</dbReference>
<dbReference type="FunFam" id="3.30.70.870:FF:000001">
    <property type="entry name" value="Elongation factor G"/>
    <property type="match status" value="1"/>
</dbReference>
<dbReference type="FunFam" id="3.40.50.300:FF:000029">
    <property type="entry name" value="Elongation factor G"/>
    <property type="match status" value="1"/>
</dbReference>
<dbReference type="Gene3D" id="3.30.230.10">
    <property type="match status" value="1"/>
</dbReference>
<dbReference type="Gene3D" id="3.30.70.240">
    <property type="match status" value="1"/>
</dbReference>
<dbReference type="Gene3D" id="3.30.70.870">
    <property type="entry name" value="Elongation Factor G (Translational Gtpase), domain 3"/>
    <property type="match status" value="1"/>
</dbReference>
<dbReference type="Gene3D" id="3.40.50.300">
    <property type="entry name" value="P-loop containing nucleotide triphosphate hydrolases"/>
    <property type="match status" value="1"/>
</dbReference>
<dbReference type="Gene3D" id="2.40.30.10">
    <property type="entry name" value="Translation factors"/>
    <property type="match status" value="1"/>
</dbReference>
<dbReference type="HAMAP" id="MF_00054_B">
    <property type="entry name" value="EF_G_EF_2_B"/>
    <property type="match status" value="1"/>
</dbReference>
<dbReference type="InterPro" id="IPR041095">
    <property type="entry name" value="EFG_II"/>
</dbReference>
<dbReference type="InterPro" id="IPR009022">
    <property type="entry name" value="EFG_III"/>
</dbReference>
<dbReference type="InterPro" id="IPR035647">
    <property type="entry name" value="EFG_III/V"/>
</dbReference>
<dbReference type="InterPro" id="IPR047872">
    <property type="entry name" value="EFG_IV"/>
</dbReference>
<dbReference type="InterPro" id="IPR035649">
    <property type="entry name" value="EFG_V"/>
</dbReference>
<dbReference type="InterPro" id="IPR000640">
    <property type="entry name" value="EFG_V-like"/>
</dbReference>
<dbReference type="InterPro" id="IPR004161">
    <property type="entry name" value="EFTu-like_2"/>
</dbReference>
<dbReference type="InterPro" id="IPR031157">
    <property type="entry name" value="G_TR_CS"/>
</dbReference>
<dbReference type="InterPro" id="IPR027417">
    <property type="entry name" value="P-loop_NTPase"/>
</dbReference>
<dbReference type="InterPro" id="IPR020568">
    <property type="entry name" value="Ribosomal_Su5_D2-typ_SF"/>
</dbReference>
<dbReference type="InterPro" id="IPR014721">
    <property type="entry name" value="Ribsml_uS5_D2-typ_fold_subgr"/>
</dbReference>
<dbReference type="InterPro" id="IPR005225">
    <property type="entry name" value="Small_GTP-bd"/>
</dbReference>
<dbReference type="InterPro" id="IPR000795">
    <property type="entry name" value="T_Tr_GTP-bd_dom"/>
</dbReference>
<dbReference type="InterPro" id="IPR009000">
    <property type="entry name" value="Transl_B-barrel_sf"/>
</dbReference>
<dbReference type="InterPro" id="IPR004540">
    <property type="entry name" value="Transl_elong_EFG/EF2"/>
</dbReference>
<dbReference type="InterPro" id="IPR005517">
    <property type="entry name" value="Transl_elong_EFG/EF2_IV"/>
</dbReference>
<dbReference type="NCBIfam" id="TIGR00484">
    <property type="entry name" value="EF-G"/>
    <property type="match status" value="1"/>
</dbReference>
<dbReference type="NCBIfam" id="NF009381">
    <property type="entry name" value="PRK12740.1-5"/>
    <property type="match status" value="1"/>
</dbReference>
<dbReference type="NCBIfam" id="TIGR00231">
    <property type="entry name" value="small_GTP"/>
    <property type="match status" value="1"/>
</dbReference>
<dbReference type="PANTHER" id="PTHR43261:SF1">
    <property type="entry name" value="RIBOSOME-RELEASING FACTOR 2, MITOCHONDRIAL"/>
    <property type="match status" value="1"/>
</dbReference>
<dbReference type="PANTHER" id="PTHR43261">
    <property type="entry name" value="TRANSLATION ELONGATION FACTOR G-RELATED"/>
    <property type="match status" value="1"/>
</dbReference>
<dbReference type="Pfam" id="PF00679">
    <property type="entry name" value="EFG_C"/>
    <property type="match status" value="1"/>
</dbReference>
<dbReference type="Pfam" id="PF14492">
    <property type="entry name" value="EFG_III"/>
    <property type="match status" value="1"/>
</dbReference>
<dbReference type="Pfam" id="PF03764">
    <property type="entry name" value="EFG_IV"/>
    <property type="match status" value="1"/>
</dbReference>
<dbReference type="Pfam" id="PF00009">
    <property type="entry name" value="GTP_EFTU"/>
    <property type="match status" value="1"/>
</dbReference>
<dbReference type="Pfam" id="PF03144">
    <property type="entry name" value="GTP_EFTU_D2"/>
    <property type="match status" value="1"/>
</dbReference>
<dbReference type="PRINTS" id="PR00315">
    <property type="entry name" value="ELONGATNFCT"/>
</dbReference>
<dbReference type="SMART" id="SM00838">
    <property type="entry name" value="EFG_C"/>
    <property type="match status" value="1"/>
</dbReference>
<dbReference type="SMART" id="SM00889">
    <property type="entry name" value="EFG_IV"/>
    <property type="match status" value="1"/>
</dbReference>
<dbReference type="SUPFAM" id="SSF54980">
    <property type="entry name" value="EF-G C-terminal domain-like"/>
    <property type="match status" value="2"/>
</dbReference>
<dbReference type="SUPFAM" id="SSF52540">
    <property type="entry name" value="P-loop containing nucleoside triphosphate hydrolases"/>
    <property type="match status" value="1"/>
</dbReference>
<dbReference type="SUPFAM" id="SSF54211">
    <property type="entry name" value="Ribosomal protein S5 domain 2-like"/>
    <property type="match status" value="1"/>
</dbReference>
<dbReference type="SUPFAM" id="SSF50447">
    <property type="entry name" value="Translation proteins"/>
    <property type="match status" value="1"/>
</dbReference>
<dbReference type="PROSITE" id="PS00301">
    <property type="entry name" value="G_TR_1"/>
    <property type="match status" value="1"/>
</dbReference>
<dbReference type="PROSITE" id="PS51722">
    <property type="entry name" value="G_TR_2"/>
    <property type="match status" value="1"/>
</dbReference>